<sequence length="225" mass="25142">MNATTAPLPYSAARLHELAHVLIANIRELAHAGWTPATSSNFSHRLDEQHAAITVSGRDKGRLVEEDIMVVDFDGLAVGRPLRPSAETLLHTQLYRRFPEICCVLHTHSPVQTIASRLYAGSDVIRLEGYELLKAFEGNTTHETAVEVPVFANTQDMQVLAAQVDALLDKQSMWGYLIEGHGLYAWGRNMAEARRHLEAFEFLLQCELELLKLRGTRQVVPVPHS</sequence>
<protein>
    <recommendedName>
        <fullName evidence="1">Methylthioribulose-1-phosphate dehydratase</fullName>
        <shortName evidence="1">MTRu-1-P dehydratase</shortName>
        <ecNumber evidence="1">4.2.1.109</ecNumber>
    </recommendedName>
</protein>
<gene>
    <name evidence="1" type="primary">mtnB1</name>
    <name type="ordered locus">PXO_00848</name>
</gene>
<gene>
    <name evidence="1" type="primary">mtnB2</name>
    <name type="ordered locus">PXO_06079</name>
</gene>
<organism>
    <name type="scientific">Xanthomonas oryzae pv. oryzae (strain PXO99A)</name>
    <dbReference type="NCBI Taxonomy" id="360094"/>
    <lineage>
        <taxon>Bacteria</taxon>
        <taxon>Pseudomonadati</taxon>
        <taxon>Pseudomonadota</taxon>
        <taxon>Gammaproteobacteria</taxon>
        <taxon>Lysobacterales</taxon>
        <taxon>Lysobacteraceae</taxon>
        <taxon>Xanthomonas</taxon>
    </lineage>
</organism>
<reference key="1">
    <citation type="journal article" date="2008" name="BMC Genomics">
        <title>Genome sequence and rapid evolution of the rice pathogen Xanthomonas oryzae pv. oryzae PXO99A.</title>
        <authorList>
            <person name="Salzberg S.L."/>
            <person name="Sommer D.D."/>
            <person name="Schatz M.C."/>
            <person name="Phillippy A.M."/>
            <person name="Rabinowicz P.D."/>
            <person name="Tsuge S."/>
            <person name="Furutani A."/>
            <person name="Ochiai H."/>
            <person name="Delcher A.L."/>
            <person name="Kelley D."/>
            <person name="Madupu R."/>
            <person name="Puiu D."/>
            <person name="Radune D."/>
            <person name="Shumway M."/>
            <person name="Trapnell C."/>
            <person name="Aparna G."/>
            <person name="Jha G."/>
            <person name="Pandey A."/>
            <person name="Patil P.B."/>
            <person name="Ishihara H."/>
            <person name="Meyer D.F."/>
            <person name="Szurek B."/>
            <person name="Verdier V."/>
            <person name="Koebnik R."/>
            <person name="Dow J.M."/>
            <person name="Ryan R.P."/>
            <person name="Hirata H."/>
            <person name="Tsuyumu S."/>
            <person name="Won Lee S."/>
            <person name="Seo Y.-S."/>
            <person name="Sriariyanum M."/>
            <person name="Ronald P.C."/>
            <person name="Sonti R.V."/>
            <person name="Van Sluys M.-A."/>
            <person name="Leach J.E."/>
            <person name="White F.F."/>
            <person name="Bogdanove A.J."/>
        </authorList>
    </citation>
    <scope>NUCLEOTIDE SEQUENCE [LARGE SCALE GENOMIC DNA]</scope>
    <source>
        <strain>PXO99A</strain>
    </source>
</reference>
<keyword id="KW-0028">Amino-acid biosynthesis</keyword>
<keyword id="KW-0456">Lyase</keyword>
<keyword id="KW-0479">Metal-binding</keyword>
<keyword id="KW-0486">Methionine biosynthesis</keyword>
<keyword id="KW-0862">Zinc</keyword>
<name>MTNB_XANOP</name>
<comment type="function">
    <text evidence="1">Catalyzes the dehydration of methylthioribulose-1-phosphate (MTRu-1-P) into 2,3-diketo-5-methylthiopentyl-1-phosphate (DK-MTP-1-P).</text>
</comment>
<comment type="catalytic activity">
    <reaction evidence="1">
        <text>5-(methylsulfanyl)-D-ribulose 1-phosphate = 5-methylsulfanyl-2,3-dioxopentyl phosphate + H2O</text>
        <dbReference type="Rhea" id="RHEA:15549"/>
        <dbReference type="ChEBI" id="CHEBI:15377"/>
        <dbReference type="ChEBI" id="CHEBI:58548"/>
        <dbReference type="ChEBI" id="CHEBI:58828"/>
        <dbReference type="EC" id="4.2.1.109"/>
    </reaction>
</comment>
<comment type="cofactor">
    <cofactor evidence="1">
        <name>Zn(2+)</name>
        <dbReference type="ChEBI" id="CHEBI:29105"/>
    </cofactor>
    <text evidence="1">Binds 1 zinc ion per subunit.</text>
</comment>
<comment type="pathway">
    <text evidence="1">Amino-acid biosynthesis; L-methionine biosynthesis via salvage pathway; L-methionine from S-methyl-5-thio-alpha-D-ribose 1-phosphate: step 2/6.</text>
</comment>
<comment type="similarity">
    <text evidence="1">Belongs to the aldolase class II family. MtnB subfamily.</text>
</comment>
<comment type="sequence caution" evidence="2">
    <conflict type="erroneous initiation">
        <sequence resource="EMBL-CDS" id="ACD59082"/>
    </conflict>
</comment>
<comment type="sequence caution" evidence="2">
    <conflict type="erroneous initiation">
        <sequence resource="EMBL-CDS" id="ACD59273"/>
    </conflict>
</comment>
<accession>B2SM82</accession>
<dbReference type="EC" id="4.2.1.109" evidence="1"/>
<dbReference type="EMBL" id="CP000967">
    <property type="protein sequence ID" value="ACD59082.1"/>
    <property type="status" value="ALT_INIT"/>
    <property type="molecule type" value="Genomic_DNA"/>
</dbReference>
<dbReference type="EMBL" id="CP000967">
    <property type="protein sequence ID" value="ACD59273.1"/>
    <property type="status" value="ALT_INIT"/>
    <property type="molecule type" value="Genomic_DNA"/>
</dbReference>
<dbReference type="RefSeq" id="WP_027703723.1">
    <property type="nucleotide sequence ID" value="NC_010717.2"/>
</dbReference>
<dbReference type="SMR" id="B2SM82"/>
<dbReference type="KEGG" id="xop:PXO_00848"/>
<dbReference type="KEGG" id="xop:PXO_06079"/>
<dbReference type="eggNOG" id="COG0235">
    <property type="taxonomic scope" value="Bacteria"/>
</dbReference>
<dbReference type="HOGENOM" id="CLU_006033_4_1_6"/>
<dbReference type="UniPathway" id="UPA00904">
    <property type="reaction ID" value="UER00875"/>
</dbReference>
<dbReference type="Proteomes" id="UP000001740">
    <property type="component" value="Chromosome"/>
</dbReference>
<dbReference type="GO" id="GO:0005737">
    <property type="term" value="C:cytoplasm"/>
    <property type="evidence" value="ECO:0007669"/>
    <property type="project" value="InterPro"/>
</dbReference>
<dbReference type="GO" id="GO:0046570">
    <property type="term" value="F:methylthioribulose 1-phosphate dehydratase activity"/>
    <property type="evidence" value="ECO:0007669"/>
    <property type="project" value="UniProtKB-UniRule"/>
</dbReference>
<dbReference type="GO" id="GO:0008270">
    <property type="term" value="F:zinc ion binding"/>
    <property type="evidence" value="ECO:0007669"/>
    <property type="project" value="UniProtKB-UniRule"/>
</dbReference>
<dbReference type="GO" id="GO:0019509">
    <property type="term" value="P:L-methionine salvage from methylthioadenosine"/>
    <property type="evidence" value="ECO:0007669"/>
    <property type="project" value="UniProtKB-UniRule"/>
</dbReference>
<dbReference type="GO" id="GO:0005996">
    <property type="term" value="P:monosaccharide metabolic process"/>
    <property type="evidence" value="ECO:0007669"/>
    <property type="project" value="UniProtKB-ARBA"/>
</dbReference>
<dbReference type="FunFam" id="3.40.225.10:FF:000007">
    <property type="entry name" value="Methylthioribulose-1-phosphate dehydratase"/>
    <property type="match status" value="1"/>
</dbReference>
<dbReference type="Gene3D" id="3.40.225.10">
    <property type="entry name" value="Class II aldolase/adducin N-terminal domain"/>
    <property type="match status" value="1"/>
</dbReference>
<dbReference type="HAMAP" id="MF_01677">
    <property type="entry name" value="Salvage_MtnB"/>
    <property type="match status" value="1"/>
</dbReference>
<dbReference type="InterPro" id="IPR001303">
    <property type="entry name" value="Aldolase_II/adducin_N"/>
</dbReference>
<dbReference type="InterPro" id="IPR036409">
    <property type="entry name" value="Aldolase_II/adducin_N_sf"/>
</dbReference>
<dbReference type="InterPro" id="IPR017714">
    <property type="entry name" value="MethylthioRu-1-P_deHdtase_MtnB"/>
</dbReference>
<dbReference type="NCBIfam" id="NF006672">
    <property type="entry name" value="PRK09220.1"/>
    <property type="match status" value="1"/>
</dbReference>
<dbReference type="NCBIfam" id="TIGR03328">
    <property type="entry name" value="salvage_mtnB"/>
    <property type="match status" value="1"/>
</dbReference>
<dbReference type="PANTHER" id="PTHR10640">
    <property type="entry name" value="METHYLTHIORIBULOSE-1-PHOSPHATE DEHYDRATASE"/>
    <property type="match status" value="1"/>
</dbReference>
<dbReference type="PANTHER" id="PTHR10640:SF7">
    <property type="entry name" value="METHYLTHIORIBULOSE-1-PHOSPHATE DEHYDRATASE"/>
    <property type="match status" value="1"/>
</dbReference>
<dbReference type="Pfam" id="PF00596">
    <property type="entry name" value="Aldolase_II"/>
    <property type="match status" value="1"/>
</dbReference>
<dbReference type="SMART" id="SM01007">
    <property type="entry name" value="Aldolase_II"/>
    <property type="match status" value="1"/>
</dbReference>
<dbReference type="SUPFAM" id="SSF53639">
    <property type="entry name" value="AraD/HMP-PK domain-like"/>
    <property type="match status" value="1"/>
</dbReference>
<feature type="chain" id="PRO_0000357117" description="Methylthioribulose-1-phosphate dehydratase">
    <location>
        <begin position="1"/>
        <end position="225"/>
    </location>
</feature>
<feature type="binding site" evidence="1">
    <location>
        <position position="106"/>
    </location>
    <ligand>
        <name>Zn(2+)</name>
        <dbReference type="ChEBI" id="CHEBI:29105"/>
    </ligand>
</feature>
<feature type="binding site" evidence="1">
    <location>
        <position position="108"/>
    </location>
    <ligand>
        <name>Zn(2+)</name>
        <dbReference type="ChEBI" id="CHEBI:29105"/>
    </ligand>
</feature>
<evidence type="ECO:0000255" key="1">
    <source>
        <dbReference type="HAMAP-Rule" id="MF_01677"/>
    </source>
</evidence>
<evidence type="ECO:0000305" key="2"/>
<proteinExistence type="inferred from homology"/>